<gene>
    <name evidence="1" type="primary">purC</name>
    <name type="ordered locus">BSUIS_A0881</name>
</gene>
<dbReference type="EC" id="6.3.2.6" evidence="1"/>
<dbReference type="EMBL" id="CP000911">
    <property type="protein sequence ID" value="ABY37949.1"/>
    <property type="molecule type" value="Genomic_DNA"/>
</dbReference>
<dbReference type="RefSeq" id="WP_004688254.1">
    <property type="nucleotide sequence ID" value="NC_010169.1"/>
</dbReference>
<dbReference type="SMR" id="B0CLG9"/>
<dbReference type="GeneID" id="97533857"/>
<dbReference type="KEGG" id="bmt:BSUIS_A0881"/>
<dbReference type="HOGENOM" id="CLU_061495_2_0_5"/>
<dbReference type="UniPathway" id="UPA00074">
    <property type="reaction ID" value="UER00131"/>
</dbReference>
<dbReference type="Proteomes" id="UP000008545">
    <property type="component" value="Chromosome I"/>
</dbReference>
<dbReference type="GO" id="GO:0005829">
    <property type="term" value="C:cytosol"/>
    <property type="evidence" value="ECO:0007669"/>
    <property type="project" value="TreeGrafter"/>
</dbReference>
<dbReference type="GO" id="GO:0005524">
    <property type="term" value="F:ATP binding"/>
    <property type="evidence" value="ECO:0007669"/>
    <property type="project" value="UniProtKB-KW"/>
</dbReference>
<dbReference type="GO" id="GO:0004639">
    <property type="term" value="F:phosphoribosylaminoimidazolesuccinocarboxamide synthase activity"/>
    <property type="evidence" value="ECO:0007669"/>
    <property type="project" value="UniProtKB-UniRule"/>
</dbReference>
<dbReference type="GO" id="GO:0006189">
    <property type="term" value="P:'de novo' IMP biosynthetic process"/>
    <property type="evidence" value="ECO:0007669"/>
    <property type="project" value="UniProtKB-UniRule"/>
</dbReference>
<dbReference type="GO" id="GO:0009236">
    <property type="term" value="P:cobalamin biosynthetic process"/>
    <property type="evidence" value="ECO:0007669"/>
    <property type="project" value="InterPro"/>
</dbReference>
<dbReference type="CDD" id="cd01415">
    <property type="entry name" value="SAICAR_synt_PurC"/>
    <property type="match status" value="1"/>
</dbReference>
<dbReference type="FunFam" id="3.30.470.20:FF:000006">
    <property type="entry name" value="Phosphoribosylaminoimidazole-succinocarboxamide synthase"/>
    <property type="match status" value="1"/>
</dbReference>
<dbReference type="Gene3D" id="3.30.470.20">
    <property type="entry name" value="ATP-grasp fold, B domain"/>
    <property type="match status" value="1"/>
</dbReference>
<dbReference type="Gene3D" id="3.30.200.20">
    <property type="entry name" value="Phosphorylase Kinase, domain 1"/>
    <property type="match status" value="1"/>
</dbReference>
<dbReference type="HAMAP" id="MF_00137">
    <property type="entry name" value="SAICAR_synth"/>
    <property type="match status" value="1"/>
</dbReference>
<dbReference type="InterPro" id="IPR028923">
    <property type="entry name" value="SAICAR_synt/ADE2_N"/>
</dbReference>
<dbReference type="InterPro" id="IPR033934">
    <property type="entry name" value="SAICAR_synt_PurC"/>
</dbReference>
<dbReference type="InterPro" id="IPR001636">
    <property type="entry name" value="SAICAR_synth"/>
</dbReference>
<dbReference type="InterPro" id="IPR050089">
    <property type="entry name" value="SAICAR_synthetase"/>
</dbReference>
<dbReference type="InterPro" id="IPR018236">
    <property type="entry name" value="SAICAR_synthetase_CS"/>
</dbReference>
<dbReference type="NCBIfam" id="TIGR00081">
    <property type="entry name" value="purC"/>
    <property type="match status" value="1"/>
</dbReference>
<dbReference type="PANTHER" id="PTHR43599">
    <property type="entry name" value="MULTIFUNCTIONAL PROTEIN ADE2"/>
    <property type="match status" value="1"/>
</dbReference>
<dbReference type="PANTHER" id="PTHR43599:SF3">
    <property type="entry name" value="SI:DKEY-6E2.2"/>
    <property type="match status" value="1"/>
</dbReference>
<dbReference type="Pfam" id="PF01259">
    <property type="entry name" value="SAICAR_synt"/>
    <property type="match status" value="1"/>
</dbReference>
<dbReference type="SUPFAM" id="SSF56104">
    <property type="entry name" value="SAICAR synthase-like"/>
    <property type="match status" value="1"/>
</dbReference>
<dbReference type="PROSITE" id="PS01057">
    <property type="entry name" value="SAICAR_SYNTHETASE_1"/>
    <property type="match status" value="1"/>
</dbReference>
<evidence type="ECO:0000255" key="1">
    <source>
        <dbReference type="HAMAP-Rule" id="MF_00137"/>
    </source>
</evidence>
<protein>
    <recommendedName>
        <fullName evidence="1">Phosphoribosylaminoimidazole-succinocarboxamide synthase</fullName>
        <ecNumber evidence="1">6.3.2.6</ecNumber>
    </recommendedName>
    <alternativeName>
        <fullName evidence="1">SAICAR synthetase</fullName>
    </alternativeName>
</protein>
<name>PUR7_BRUSI</name>
<reference key="1">
    <citation type="submission" date="2007-12" db="EMBL/GenBank/DDBJ databases">
        <title>Brucella suis ATCC 23445 whole genome shotgun sequencing project.</title>
        <authorList>
            <person name="Setubal J.C."/>
            <person name="Bowns C."/>
            <person name="Boyle S."/>
            <person name="Crasta O.R."/>
            <person name="Czar M.J."/>
            <person name="Dharmanolla C."/>
            <person name="Gillespie J.J."/>
            <person name="Kenyon R.W."/>
            <person name="Lu J."/>
            <person name="Mane S."/>
            <person name="Mohapatra S."/>
            <person name="Nagrani S."/>
            <person name="Purkayastha A."/>
            <person name="Rajasimha H.K."/>
            <person name="Shallom J.M."/>
            <person name="Shallom S."/>
            <person name="Shukla M."/>
            <person name="Snyder E.E."/>
            <person name="Sobral B.W."/>
            <person name="Wattam A.R."/>
            <person name="Will R."/>
            <person name="Williams K."/>
            <person name="Yoo H."/>
            <person name="Bruce D."/>
            <person name="Detter C."/>
            <person name="Munk C."/>
            <person name="Brettin T.S."/>
        </authorList>
    </citation>
    <scope>NUCLEOTIDE SEQUENCE [LARGE SCALE GENOMIC DNA]</scope>
    <source>
        <strain>ATCC 23445 / NCTC 10510</strain>
    </source>
</reference>
<organism>
    <name type="scientific">Brucella suis (strain ATCC 23445 / NCTC 10510)</name>
    <dbReference type="NCBI Taxonomy" id="470137"/>
    <lineage>
        <taxon>Bacteria</taxon>
        <taxon>Pseudomonadati</taxon>
        <taxon>Pseudomonadota</taxon>
        <taxon>Alphaproteobacteria</taxon>
        <taxon>Hyphomicrobiales</taxon>
        <taxon>Brucellaceae</taxon>
        <taxon>Brucella/Ochrobactrum group</taxon>
        <taxon>Brucella</taxon>
    </lineage>
</organism>
<proteinExistence type="inferred from homology"/>
<accession>B0CLG9</accession>
<comment type="catalytic activity">
    <reaction evidence="1">
        <text>5-amino-1-(5-phospho-D-ribosyl)imidazole-4-carboxylate + L-aspartate + ATP = (2S)-2-[5-amino-1-(5-phospho-beta-D-ribosyl)imidazole-4-carboxamido]succinate + ADP + phosphate + 2 H(+)</text>
        <dbReference type="Rhea" id="RHEA:22628"/>
        <dbReference type="ChEBI" id="CHEBI:15378"/>
        <dbReference type="ChEBI" id="CHEBI:29991"/>
        <dbReference type="ChEBI" id="CHEBI:30616"/>
        <dbReference type="ChEBI" id="CHEBI:43474"/>
        <dbReference type="ChEBI" id="CHEBI:58443"/>
        <dbReference type="ChEBI" id="CHEBI:77657"/>
        <dbReference type="ChEBI" id="CHEBI:456216"/>
        <dbReference type="EC" id="6.3.2.6"/>
    </reaction>
</comment>
<comment type="pathway">
    <text evidence="1">Purine metabolism; IMP biosynthesis via de novo pathway; 5-amino-1-(5-phospho-D-ribosyl)imidazole-4-carboxamide from 5-amino-1-(5-phospho-D-ribosyl)imidazole-4-carboxylate: step 1/2.</text>
</comment>
<comment type="similarity">
    <text evidence="1">Belongs to the SAICAR synthetase family.</text>
</comment>
<feature type="chain" id="PRO_1000076447" description="Phosphoribosylaminoimidazole-succinocarboxamide synthase">
    <location>
        <begin position="1"/>
        <end position="254"/>
    </location>
</feature>
<keyword id="KW-0067">ATP-binding</keyword>
<keyword id="KW-0436">Ligase</keyword>
<keyword id="KW-0547">Nucleotide-binding</keyword>
<keyword id="KW-0658">Purine biosynthesis</keyword>
<sequence length="254" mass="28956">MNRRRRIYEGKAKILYEGPEPGTLVQFFKDDATAFNAKKHEVIDGKGVLNNRISEHIFTQLNRIGIPTHFIRRLNMREQLIKEVEIIPLEVVVRNVAAGSLAKRLGLEEGTILPRSIIEFYYKADALDDPMVTEEHITAFGWASPQEIDDIMALAIRVNDFLTGLFLGIGIQLVDFKMECGRLWEGDMMRIVVADEISPDSARLWDITTNDKLDKDRFRRDMGGLVEAYQEVARRLGIMNENDTPRPSGPTLVK</sequence>